<evidence type="ECO:0000255" key="1"/>
<evidence type="ECO:0000269" key="2">
    <source>
    </source>
</evidence>
<evidence type="ECO:0000269" key="3">
    <source>
    </source>
</evidence>
<evidence type="ECO:0000269" key="4">
    <source>
    </source>
</evidence>
<evidence type="ECO:0000305" key="5"/>
<evidence type="ECO:0007829" key="6">
    <source>
        <dbReference type="PDB" id="2WK1"/>
    </source>
</evidence>
<comment type="function">
    <text evidence="2 3">S-adenosyl-L-methionine-dependent O-methyltransferase that methylates at 4-OH of the noviose moiety, the penultimate step in the novobiocin biosynthesis pathway. Novobiocin is an aminocoumarin family antibiotic that targets bacterial DNA gyrases.</text>
</comment>
<comment type="catalytic activity">
    <reaction evidence="2">
        <text>desmethyldescarbamoylnovobiocin + S-adenosyl-L-methionine = descarbamoylnovobiocin + S-adenosyl-L-homocysteine + H(+)</text>
        <dbReference type="Rhea" id="RHEA:36655"/>
        <dbReference type="ChEBI" id="CHEBI:15378"/>
        <dbReference type="ChEBI" id="CHEBI:57856"/>
        <dbReference type="ChEBI" id="CHEBI:59789"/>
        <dbReference type="ChEBI" id="CHEBI:73955"/>
        <dbReference type="ChEBI" id="CHEBI:73957"/>
        <dbReference type="EC" id="2.1.1.285"/>
    </reaction>
</comment>
<comment type="cofactor">
    <cofactor evidence="5">
        <name>Mg(2+)</name>
        <dbReference type="ChEBI" id="CHEBI:18420"/>
    </cofactor>
</comment>
<comment type="biophysicochemical properties">
    <kinetics>
        <KM evidence="2">9.5 uM for demethyldecarbamoylnovobiocin</KM>
        <text>kcat is 0.4 min(-1) with demethyldecarbamoylnovobiocin as substrate.</text>
    </kinetics>
</comment>
<comment type="pathway">
    <text evidence="2">Antibiotic biosynthesis; novobiocin biosynthesis.</text>
</comment>
<comment type="subunit">
    <text evidence="4">Homodimer.</text>
</comment>
<comment type="similarity">
    <text evidence="5">Belongs to the methyltransferase TylF/MycF family.</text>
</comment>
<name>NOVP_STRNV</name>
<proteinExistence type="evidence at protein level"/>
<sequence>MAPIVETAKETNSDSSLYLDLMIKVLAGTVYEDPAHRENFSHRDSTYREEVRNEGRDWPANAHTMIGIKRLENIRQCVEDVIGNNVPGDLVETGVWRGGACILMRGILRAHDVRDRTVWVADSFQGIPDVGEDGYAGDRKMALHRRNSVLAVSEEEVRRNFRNYDLLDEQVRFLPGWFKDTLPTAPIDTLAVLRMDGDLYESTWDTLTNLYPKVSVGGYVIVDDYMMCPPCKDAVDEYRAKFDIADELITIDRDGVYWQRTR</sequence>
<gene>
    <name type="primary">novP</name>
</gene>
<feature type="chain" id="PRO_0000424004" description="Demethyldecarbamoylnovobiocin O-methyltransferase">
    <location>
        <begin position="1"/>
        <end position="262"/>
    </location>
</feature>
<feature type="active site" description="Proton acceptor" evidence="1">
    <location>
        <position position="72"/>
    </location>
</feature>
<feature type="binding site" evidence="4">
    <location>
        <begin position="64"/>
        <end position="65"/>
    </location>
    <ligand>
        <name>S-adenosyl-L-methionine</name>
        <dbReference type="ChEBI" id="CHEBI:59789"/>
    </ligand>
</feature>
<feature type="binding site" evidence="4">
    <location>
        <begin position="92"/>
        <end position="96"/>
    </location>
    <ligand>
        <name>S-adenosyl-L-methionine</name>
        <dbReference type="ChEBI" id="CHEBI:59789"/>
    </ligand>
</feature>
<feature type="binding site" evidence="4">
    <location>
        <begin position="122"/>
        <end position="126"/>
    </location>
    <ligand>
        <name>S-adenosyl-L-methionine</name>
        <dbReference type="ChEBI" id="CHEBI:59789"/>
    </ligand>
</feature>
<feature type="binding site" evidence="4">
    <location>
        <position position="178"/>
    </location>
    <ligand>
        <name>S-adenosyl-L-methionine</name>
        <dbReference type="ChEBI" id="CHEBI:59789"/>
    </ligand>
</feature>
<feature type="binding site" evidence="4">
    <location>
        <begin position="196"/>
        <end position="197"/>
    </location>
    <ligand>
        <name>S-adenosyl-L-methionine</name>
        <dbReference type="ChEBI" id="CHEBI:59789"/>
    </ligand>
</feature>
<feature type="binding site" evidence="1">
    <location>
        <position position="196"/>
    </location>
    <ligand>
        <name>Mg(2+)</name>
        <dbReference type="ChEBI" id="CHEBI:18420"/>
    </ligand>
</feature>
<feature type="binding site" evidence="4">
    <location>
        <position position="202"/>
    </location>
    <ligand>
        <name>S-adenosyl-L-methionine</name>
        <dbReference type="ChEBI" id="CHEBI:59789"/>
    </ligand>
</feature>
<feature type="binding site" evidence="1">
    <location>
        <position position="223"/>
    </location>
    <ligand>
        <name>Mg(2+)</name>
        <dbReference type="ChEBI" id="CHEBI:18420"/>
    </ligand>
</feature>
<feature type="binding site" evidence="1">
    <location>
        <position position="224"/>
    </location>
    <ligand>
        <name>Mg(2+)</name>
        <dbReference type="ChEBI" id="CHEBI:18420"/>
    </ligand>
</feature>
<feature type="helix" evidence="6">
    <location>
        <begin position="15"/>
        <end position="26"/>
    </location>
</feature>
<feature type="turn" evidence="6">
    <location>
        <begin position="27"/>
        <end position="32"/>
    </location>
</feature>
<feature type="helix" evidence="6">
    <location>
        <begin position="49"/>
        <end position="53"/>
    </location>
</feature>
<feature type="strand" evidence="6">
    <location>
        <begin position="59"/>
        <end position="61"/>
    </location>
</feature>
<feature type="helix" evidence="6">
    <location>
        <begin position="67"/>
        <end position="83"/>
    </location>
</feature>
<feature type="strand" evidence="6">
    <location>
        <begin position="89"/>
        <end position="93"/>
    </location>
</feature>
<feature type="helix" evidence="6">
    <location>
        <begin position="99"/>
        <end position="110"/>
    </location>
</feature>
<feature type="strand" evidence="6">
    <location>
        <begin position="118"/>
        <end position="122"/>
    </location>
</feature>
<feature type="helix" evidence="6">
    <location>
        <begin position="136"/>
        <end position="141"/>
    </location>
</feature>
<feature type="helix" evidence="6">
    <location>
        <begin position="143"/>
        <end position="146"/>
    </location>
</feature>
<feature type="helix" evidence="6">
    <location>
        <begin position="147"/>
        <end position="150"/>
    </location>
</feature>
<feature type="helix" evidence="6">
    <location>
        <begin position="154"/>
        <end position="163"/>
    </location>
</feature>
<feature type="strand" evidence="6">
    <location>
        <begin position="171"/>
        <end position="176"/>
    </location>
</feature>
<feature type="helix" evidence="6">
    <location>
        <begin position="178"/>
        <end position="181"/>
    </location>
</feature>
<feature type="strand" evidence="6">
    <location>
        <begin position="190"/>
        <end position="195"/>
    </location>
</feature>
<feature type="helix" evidence="6">
    <location>
        <begin position="200"/>
        <end position="210"/>
    </location>
</feature>
<feature type="helix" evidence="6">
    <location>
        <begin position="211"/>
        <end position="213"/>
    </location>
</feature>
<feature type="strand" evidence="6">
    <location>
        <begin position="214"/>
        <end position="224"/>
    </location>
</feature>
<feature type="helix" evidence="6">
    <location>
        <begin position="229"/>
        <end position="241"/>
    </location>
</feature>
<feature type="strand" evidence="6">
    <location>
        <begin position="252"/>
        <end position="254"/>
    </location>
</feature>
<feature type="strand" evidence="6">
    <location>
        <begin position="256"/>
        <end position="259"/>
    </location>
</feature>
<dbReference type="EC" id="2.1.1.285" evidence="2"/>
<dbReference type="EMBL" id="AF170880">
    <property type="protein sequence ID" value="AAF67509.1"/>
    <property type="molecule type" value="Genomic_DNA"/>
</dbReference>
<dbReference type="RefSeq" id="WP_069626145.1">
    <property type="nucleotide sequence ID" value="NZ_JBEZOH010000009.1"/>
</dbReference>
<dbReference type="PDB" id="2WK1">
    <property type="method" value="X-ray"/>
    <property type="resolution" value="1.40 A"/>
    <property type="chains" value="A=1-262"/>
</dbReference>
<dbReference type="PDBsum" id="2WK1"/>
<dbReference type="SMR" id="Q9L9F2"/>
<dbReference type="KEGG" id="ag:AAF67509"/>
<dbReference type="BioCyc" id="MetaCyc:MONOMER-18053"/>
<dbReference type="BRENDA" id="2.1.1.285">
    <property type="organism ID" value="6099"/>
</dbReference>
<dbReference type="UniPathway" id="UPA01035"/>
<dbReference type="EvolutionaryTrace" id="Q9L9F2"/>
<dbReference type="GO" id="GO:0046872">
    <property type="term" value="F:metal ion binding"/>
    <property type="evidence" value="ECO:0007669"/>
    <property type="project" value="UniProtKB-KW"/>
</dbReference>
<dbReference type="GO" id="GO:0008168">
    <property type="term" value="F:methyltransferase activity"/>
    <property type="evidence" value="ECO:0000314"/>
    <property type="project" value="UniProtKB"/>
</dbReference>
<dbReference type="GO" id="GO:0032259">
    <property type="term" value="P:methylation"/>
    <property type="evidence" value="ECO:0000314"/>
    <property type="project" value="UniProtKB"/>
</dbReference>
<dbReference type="GO" id="GO:0043642">
    <property type="term" value="P:novobiocin biosynthetic process"/>
    <property type="evidence" value="ECO:0000314"/>
    <property type="project" value="UniProtKB"/>
</dbReference>
<dbReference type="FunFam" id="3.40.50.150:FF:000331">
    <property type="entry name" value="Macrocin O-methyltransferase"/>
    <property type="match status" value="1"/>
</dbReference>
<dbReference type="Gene3D" id="3.40.50.150">
    <property type="entry name" value="Vaccinia Virus protein VP39"/>
    <property type="match status" value="1"/>
</dbReference>
<dbReference type="InterPro" id="IPR029063">
    <property type="entry name" value="SAM-dependent_MTases_sf"/>
</dbReference>
<dbReference type="InterPro" id="IPR008884">
    <property type="entry name" value="TylF_MeTrfase"/>
</dbReference>
<dbReference type="PANTHER" id="PTHR40036">
    <property type="entry name" value="MACROCIN O-METHYLTRANSFERASE"/>
    <property type="match status" value="1"/>
</dbReference>
<dbReference type="PANTHER" id="PTHR40036:SF1">
    <property type="entry name" value="MACROCIN O-METHYLTRANSFERASE"/>
    <property type="match status" value="1"/>
</dbReference>
<dbReference type="Pfam" id="PF05711">
    <property type="entry name" value="TylF"/>
    <property type="match status" value="1"/>
</dbReference>
<dbReference type="SUPFAM" id="SSF53335">
    <property type="entry name" value="S-adenosyl-L-methionine-dependent methyltransferases"/>
    <property type="match status" value="1"/>
</dbReference>
<accession>Q9L9F2</accession>
<reference key="1">
    <citation type="journal article" date="2000" name="Antimicrob. Agents Chemother.">
        <title>Identification of the novobiocin biosynthetic gene cluster of Streptomyces spheroides NCIB 11891.</title>
        <authorList>
            <person name="Steffensky M."/>
            <person name="Muhlenweg A."/>
            <person name="Wang Z.X."/>
            <person name="Li S.M."/>
            <person name="Heide L."/>
        </authorList>
    </citation>
    <scope>NUCLEOTIDE SEQUENCE [GENOMIC DNA]</scope>
    <source>
        <strain>ATCC 23965 / DSM 40292 / JCM 4252 / NBRC 12917 / NCIMB 11891 / NRRL 2449</strain>
    </source>
</reference>
<reference key="2">
    <citation type="journal article" date="2004" name="Angew. Chem. Int. Ed.">
        <title>Characterization of NovP and NovN: completion of novobiocin biosynthesis by sequential tailoring of the noviosyl ring.</title>
        <authorList>
            <person name="Freel Meyers C.L."/>
            <person name="Oberthur M."/>
            <person name="Xu H."/>
            <person name="Heide L."/>
            <person name="Kahne D."/>
            <person name="Walsh C.T."/>
        </authorList>
    </citation>
    <scope>FUNCTION</scope>
    <scope>CATALYTIC ACTIVITY</scope>
    <scope>BIOPHYSICOCHEMICAL PROPERTIES</scope>
    <scope>PATHWAY</scope>
    <source>
        <strain>ATCC 23965 / DSM 40292 / JCM 4252 / NBRC 12917 / NCIMB 11891 / NRRL 2449</strain>
    </source>
</reference>
<reference key="3">
    <citation type="journal article" date="2004" name="Proc. Natl. Acad. Sci. U.S.A.">
        <title>Mass spectrometric characterization of a three-enzyme tandem reaction for assembly and modification of the novobiocin skeleton.</title>
        <authorList>
            <person name="Pi N."/>
            <person name="Meyers C.L."/>
            <person name="Pacholec M."/>
            <person name="Walsh C.T."/>
            <person name="Leary J.A."/>
        </authorList>
    </citation>
    <scope>FUNCTION</scope>
    <source>
        <strain>ATCC 23965 / DSM 40292 / JCM 4252 / NBRC 12917 / NCIMB 11891 / NRRL 2449</strain>
    </source>
</reference>
<reference key="4">
    <citation type="journal article" date="2010" name="J. Mol. Biol.">
        <title>The crystal structure of the novobiocin biosynthetic enzyme NovP: the first representative structure for the TylF O-methyltransferase superfamily.</title>
        <authorList>
            <person name="Gomez Garcia I."/>
            <person name="Stevenson C.E."/>
            <person name="Uson I."/>
            <person name="Freel Meyers C.L."/>
            <person name="Walsh C.T."/>
            <person name="Lawson D.M."/>
        </authorList>
    </citation>
    <scope>X-RAY CRYSTALLOGRAPHY (1.40 ANGSTROMS) IN COMPLEX WITH S-ADENOSYL-L-HOMOCYSTEINE</scope>
    <scope>SUBUNIT</scope>
</reference>
<keyword id="KW-0002">3D-structure</keyword>
<keyword id="KW-0045">Antibiotic biosynthesis</keyword>
<keyword id="KW-0460">Magnesium</keyword>
<keyword id="KW-0479">Metal-binding</keyword>
<keyword id="KW-0489">Methyltransferase</keyword>
<keyword id="KW-0949">S-adenosyl-L-methionine</keyword>
<keyword id="KW-0808">Transferase</keyword>
<organism>
    <name type="scientific">Streptomyces niveus</name>
    <name type="common">Streptomyces spheroides</name>
    <dbReference type="NCBI Taxonomy" id="193462"/>
    <lineage>
        <taxon>Bacteria</taxon>
        <taxon>Bacillati</taxon>
        <taxon>Actinomycetota</taxon>
        <taxon>Actinomycetes</taxon>
        <taxon>Kitasatosporales</taxon>
        <taxon>Streptomycetaceae</taxon>
        <taxon>Streptomyces</taxon>
    </lineage>
</organism>
<protein>
    <recommendedName>
        <fullName evidence="5">Demethyldecarbamoylnovobiocin O-methyltransferase</fullName>
        <ecNumber evidence="2">2.1.1.285</ecNumber>
    </recommendedName>
    <alternativeName>
        <fullName>Novobiocin biosynthesis protein P</fullName>
    </alternativeName>
</protein>